<sequence length="956" mass="102532">MSKITLSSLKSSLQQGLKNGKNKLNQAGTTLKNGLTQTGHSLQNGAKKLILYIPQGYDSGQGNGVQDLVKAANDLGIEVWREERSNLDIAKTSFDTTQKILGFTDRGIVLFAPQLDNLLKKNPKIGNTLGSASSISQNIGKANTVLGGIQSILGSVLSGVNLNELLQNKDPNQLELAKAGLELTNELVGNIASSVQTVDAFAEQISKLGSHLQNVKGLGGLSNKLQNLPDLGKASLGLDIISGLLSGASAGLILADKEASTEKKAAAGVEFANQIIGNVTKAVSSYILAQRVASGLSSTGPVAALIASTVALAVSPLSFLNVADKFKQADLIKSYSERFQKLGYDGDRLLADFHRETGTIDASVTTINTALAAISGGVGAASAGSLVGAPVALLVAGVTGLITTILEYSKQAMFEHVANKVHDRIVEWEKKHNKNYFEQGYDSRHLADLQDNMKFLINLNKELQAERVVAITQQRWDNQIGDLAAISRRTDKISSGKAYVDAFEEGQHQSYDSSVQLDNKNGIINISNTNRKTQSVLFRTPLLTPGEENRERIQEGKNSYITKLHIQRVDSWTVTDGDASSSVDFTNVVQRIAVKFDDAGNIIESKDTKIIANLGAGNDNVFVGSSTTVIDGGDGHDRVHYSRGEYGALVIDATAETEKGSYSVKRYVGDSKALHETIATHQTNVGNREEKIEYRREDDRFHTGYTVTDSLKSVEEIIGSQFNDIFKGSQFDDVFHGGNGVDTIDGNDGDDHLFGGAGDDVIDGGNGNNFLVGGTGNDIISGGKDNDIYVHKTGDGNDSITDSGGQDKLAFSDVNLKDLTFKKVDSSLEIINQKGEKVRIGNWFLEDDLASTVANYKATNDRKIEEIIGKGGERITSEQVDKLIKEGNNQISAEALSKVVNDYNTSKDRQNVSNSLAKLISSVGSFTSSSDFRNNLGTYVPSSIDVSNNIQLARAA</sequence>
<reference key="1">
    <citation type="journal article" date="1989" name="DNA">
        <title>Cloning and characterization of a hemolysin gene from Actinobacillus (Haemophilus) pleuropneumoniae.</title>
        <authorList>
            <person name="Chang Y.-F."/>
            <person name="Young R."/>
            <person name="Struck D.K."/>
        </authorList>
    </citation>
    <scope>NUCLEOTIDE SEQUENCE [GENOMIC DNA]</scope>
    <source>
        <strain>Serotype 5</strain>
    </source>
</reference>
<reference key="2">
    <citation type="journal article" date="1991" name="Infect. Immun.">
        <title>Cytolysins of Actinobacillus pleuropneumoniae serotype 9.</title>
        <authorList>
            <person name="Smits M.A."/>
            <person name="Briaire J."/>
            <person name="Jansen R."/>
            <person name="Smith H.E."/>
            <person name="Kamp E.M."/>
            <person name="Gielkens A.L.J."/>
        </authorList>
    </citation>
    <scope>NUCLEOTIDE SEQUENCE [GENOMIC DNA]</scope>
    <source>
        <strain>Isolate CVI 13261 / Serotype 9</strain>
    </source>
</reference>
<keyword id="KW-0106">Calcium</keyword>
<keyword id="KW-0204">Cytolysis</keyword>
<keyword id="KW-0354">Hemolysis</keyword>
<keyword id="KW-1032">Host cell membrane</keyword>
<keyword id="KW-1043">Host membrane</keyword>
<keyword id="KW-0449">Lipoprotein</keyword>
<keyword id="KW-0472">Membrane</keyword>
<keyword id="KW-0564">Palmitate</keyword>
<keyword id="KW-0677">Repeat</keyword>
<keyword id="KW-0964">Secreted</keyword>
<keyword id="KW-0800">Toxin</keyword>
<keyword id="KW-0812">Transmembrane</keyword>
<keyword id="KW-1133">Transmembrane helix</keyword>
<keyword id="KW-0843">Virulence</keyword>
<dbReference type="EMBL" id="M30602">
    <property type="protein sequence ID" value="AAA87232.1"/>
    <property type="molecule type" value="Genomic_DNA"/>
</dbReference>
<dbReference type="EMBL" id="X61111">
    <property type="protein sequence ID" value="CAA43423.1"/>
    <property type="molecule type" value="Genomic_DNA"/>
</dbReference>
<dbReference type="PIR" id="B33389">
    <property type="entry name" value="B33389"/>
</dbReference>
<dbReference type="RefSeq" id="WP_005597652.1">
    <property type="nucleotide sequence ID" value="NZ_LS483358.1"/>
</dbReference>
<dbReference type="SMR" id="P15377"/>
<dbReference type="TCDB" id="1.C.11.1.2">
    <property type="family name" value="the pore-forming rtx toxin (rtx-toxin) family"/>
</dbReference>
<dbReference type="GO" id="GO:0005576">
    <property type="term" value="C:extracellular region"/>
    <property type="evidence" value="ECO:0007669"/>
    <property type="project" value="UniProtKB-SubCell"/>
</dbReference>
<dbReference type="GO" id="GO:0020002">
    <property type="term" value="C:host cell plasma membrane"/>
    <property type="evidence" value="ECO:0007669"/>
    <property type="project" value="UniProtKB-SubCell"/>
</dbReference>
<dbReference type="GO" id="GO:0016020">
    <property type="term" value="C:membrane"/>
    <property type="evidence" value="ECO:0007669"/>
    <property type="project" value="UniProtKB-KW"/>
</dbReference>
<dbReference type="GO" id="GO:0005509">
    <property type="term" value="F:calcium ion binding"/>
    <property type="evidence" value="ECO:0007669"/>
    <property type="project" value="InterPro"/>
</dbReference>
<dbReference type="GO" id="GO:0015267">
    <property type="term" value="F:channel activity"/>
    <property type="evidence" value="ECO:0007669"/>
    <property type="project" value="InterPro"/>
</dbReference>
<dbReference type="GO" id="GO:0090729">
    <property type="term" value="F:toxin activity"/>
    <property type="evidence" value="ECO:0007669"/>
    <property type="project" value="UniProtKB-KW"/>
</dbReference>
<dbReference type="GO" id="GO:0031640">
    <property type="term" value="P:killing of cells of another organism"/>
    <property type="evidence" value="ECO:0007669"/>
    <property type="project" value="UniProtKB-KW"/>
</dbReference>
<dbReference type="Gene3D" id="2.150.10.10">
    <property type="entry name" value="Serralysin-like metalloprotease, C-terminal"/>
    <property type="match status" value="1"/>
</dbReference>
<dbReference type="InterPro" id="IPR001343">
    <property type="entry name" value="Hemolysn_Ca-bd"/>
</dbReference>
<dbReference type="InterPro" id="IPR013550">
    <property type="entry name" value="RTX_C"/>
</dbReference>
<dbReference type="InterPro" id="IPR018504">
    <property type="entry name" value="RTX_pore_form"/>
</dbReference>
<dbReference type="InterPro" id="IPR050557">
    <property type="entry name" value="RTX_toxin/Mannuronan_C5-epim"/>
</dbReference>
<dbReference type="InterPro" id="IPR003995">
    <property type="entry name" value="RTX_toxin_determinant-A"/>
</dbReference>
<dbReference type="InterPro" id="IPR011049">
    <property type="entry name" value="Serralysin-like_metalloprot_C"/>
</dbReference>
<dbReference type="NCBIfam" id="NF033943">
    <property type="entry name" value="RTX_toxin"/>
    <property type="match status" value="1"/>
</dbReference>
<dbReference type="PANTHER" id="PTHR38340">
    <property type="entry name" value="S-LAYER PROTEIN"/>
    <property type="match status" value="1"/>
</dbReference>
<dbReference type="PANTHER" id="PTHR38340:SF1">
    <property type="entry name" value="S-LAYER PROTEIN"/>
    <property type="match status" value="1"/>
</dbReference>
<dbReference type="Pfam" id="PF00353">
    <property type="entry name" value="HemolysinCabind"/>
    <property type="match status" value="2"/>
</dbReference>
<dbReference type="Pfam" id="PF02382">
    <property type="entry name" value="RTX"/>
    <property type="match status" value="1"/>
</dbReference>
<dbReference type="Pfam" id="PF08339">
    <property type="entry name" value="RTX_C"/>
    <property type="match status" value="1"/>
</dbReference>
<dbReference type="PRINTS" id="PR00313">
    <property type="entry name" value="CABNDNGRPT"/>
</dbReference>
<dbReference type="PRINTS" id="PR01488">
    <property type="entry name" value="RTXTOXINA"/>
</dbReference>
<dbReference type="SUPFAM" id="SSF51120">
    <property type="entry name" value="beta-Roll"/>
    <property type="match status" value="1"/>
</dbReference>
<dbReference type="PROSITE" id="PS00330">
    <property type="entry name" value="HEMOLYSIN_CALCIUM"/>
    <property type="match status" value="1"/>
</dbReference>
<comment type="function">
    <text>One of the virulence factors of A.pleuropneumoniae, which shows a weak hemolytic activity and is moderately cytotoxic for alveolar macrophages and neutrophils.</text>
</comment>
<comment type="subcellular location">
    <subcellularLocation>
        <location>Secreted</location>
    </subcellularLocation>
    <subcellularLocation>
        <location evidence="3">Host cell membrane</location>
        <topology evidence="3">Multi-pass membrane protein</topology>
    </subcellularLocation>
</comment>
<comment type="domain">
    <text evidence="1">The Gly-rich region is probably involved in binding calcium, which is required for target cell-binding or cytolytic activity.</text>
</comment>
<comment type="domain">
    <text evidence="1">The three transmembrane domains are believed to be involved in pore formation by the cytotoxin.</text>
</comment>
<comment type="PTM">
    <text evidence="1">Palmitoylated by ApxIIC. The toxin only becomes active when modified (By similarity).</text>
</comment>
<comment type="similarity">
    <text evidence="3">Belongs to the RTX prokaryotic toxin (TC 1.C.11) family.</text>
</comment>
<protein>
    <recommendedName>
        <fullName>RTX-II toxin determinant A</fullName>
    </recommendedName>
    <alternativeName>
        <fullName>APX-IIA</fullName>
    </alternativeName>
    <alternativeName>
        <fullName>Cytolysin IIA</fullName>
        <shortName>CLY-IIA</shortName>
    </alternativeName>
    <alternativeName>
        <fullName>Hemolysin IIA</fullName>
        <shortName>HLY-IIA</shortName>
    </alternativeName>
</protein>
<proteinExistence type="inferred from homology"/>
<evidence type="ECO:0000250" key="1"/>
<evidence type="ECO:0000255" key="2"/>
<evidence type="ECO:0000305" key="3"/>
<gene>
    <name type="primary">apxIIA</name>
    <name type="synonym">appA</name>
    <name type="synonym">clyIIA</name>
    <name type="synonym">cytC</name>
    <name type="synonym">hlyIIA</name>
</gene>
<organism>
    <name type="scientific">Actinobacillus pleuropneumoniae</name>
    <name type="common">Haemophilus pleuropneumoniae</name>
    <dbReference type="NCBI Taxonomy" id="715"/>
    <lineage>
        <taxon>Bacteria</taxon>
        <taxon>Pseudomonadati</taxon>
        <taxon>Pseudomonadota</taxon>
        <taxon>Gammaproteobacteria</taxon>
        <taxon>Pasteurellales</taxon>
        <taxon>Pasteurellaceae</taxon>
        <taxon>Actinobacillus</taxon>
    </lineage>
</organism>
<name>RTX2A_ACTPL</name>
<accession>P15377</accession>
<feature type="chain" id="PRO_0000196239" description="RTX-II toxin determinant A">
    <location>
        <begin position="1"/>
        <end position="956"/>
    </location>
</feature>
<feature type="transmembrane region" description="Helical" evidence="2">
    <location>
        <begin position="233"/>
        <end position="256"/>
    </location>
</feature>
<feature type="transmembrane region" description="Helical" evidence="2">
    <location>
        <begin position="266"/>
        <end position="323"/>
    </location>
</feature>
<feature type="transmembrane region" description="Helical" evidence="2">
    <location>
        <begin position="361"/>
        <end position="406"/>
    </location>
</feature>
<feature type="repeat" description="Hemolysin-type calcium-binding 1">
    <location>
        <begin position="718"/>
        <end position="735"/>
    </location>
</feature>
<feature type="repeat" description="Hemolysin-type calcium-binding 2">
    <location>
        <begin position="736"/>
        <end position="753"/>
    </location>
</feature>
<feature type="repeat" description="Hemolysin-type calcium-binding 3">
    <location>
        <begin position="754"/>
        <end position="771"/>
    </location>
</feature>
<feature type="repeat" description="Hemolysin-type calcium-binding 4">
    <location>
        <begin position="772"/>
        <end position="789"/>
    </location>
</feature>
<feature type="repeat" description="Hemolysin-type calcium-binding 5">
    <location>
        <begin position="792"/>
        <end position="809"/>
    </location>
</feature>